<sequence>MTKNSSTVFTHARIATLEEKAANLGLIEEAALVVKDARIVYAGPENKLPDEYASFEKIDCGNRLITPGLIDCHTHLVHAGNRAHEFELRLQGATYEEVARAGGGIVSSVRNLRAASEDDLVRETLPRLDALIAEGVTTVEVKSGYGLDRDSEIKSLKAARRLGEERDVAIRTTFLGAHALPPEMNGDKAAYIDRVINDMLPAIAEQGLADAVDGFCEGIAFLPDEIARVFDAAKAHDIPVKLHADQLSNLHGAALAASYGALSADHLEYTDADGAAAMASAGTVAVLLPGAYYFIRETQKPPVEAFRAAGTKMALATDNNPGTSPLTSLLLTMNMGATLFRMTVEECIAGVTREAARALGILDQTGTLEIGKDADLAIWDIERPAELVYRIGFNPLWKRVFKGQI</sequence>
<reference key="1">
    <citation type="journal article" date="2005" name="J. Bacteriol.">
        <title>Completion of the genome sequence of Brucella abortus and comparison to the highly similar genomes of Brucella melitensis and Brucella suis.</title>
        <authorList>
            <person name="Halling S.M."/>
            <person name="Peterson-Burch B.D."/>
            <person name="Bricker B.J."/>
            <person name="Zuerner R.L."/>
            <person name="Qing Z."/>
            <person name="Li L.-L."/>
            <person name="Kapur V."/>
            <person name="Alt D.P."/>
            <person name="Olsen S.C."/>
        </authorList>
    </citation>
    <scope>NUCLEOTIDE SEQUENCE [LARGE SCALE GENOMIC DNA]</scope>
    <source>
        <strain>9-941</strain>
    </source>
</reference>
<proteinExistence type="inferred from homology"/>
<name>HUTI_BRUAB</name>
<dbReference type="EC" id="3.5.2.7" evidence="1"/>
<dbReference type="EMBL" id="AE017224">
    <property type="protein sequence ID" value="AAX75737.1"/>
    <property type="molecule type" value="Genomic_DNA"/>
</dbReference>
<dbReference type="RefSeq" id="WP_002965718.1">
    <property type="nucleotide sequence ID" value="NC_006933.1"/>
</dbReference>
<dbReference type="SMR" id="Q579E7"/>
<dbReference type="EnsemblBacteria" id="AAX75737">
    <property type="protein sequence ID" value="AAX75737"/>
    <property type="gene ID" value="BruAb2_0304"/>
</dbReference>
<dbReference type="GeneID" id="93015750"/>
<dbReference type="KEGG" id="bmb:BruAb2_0304"/>
<dbReference type="HOGENOM" id="CLU_041647_0_0_5"/>
<dbReference type="UniPathway" id="UPA00379">
    <property type="reaction ID" value="UER00551"/>
</dbReference>
<dbReference type="Proteomes" id="UP000000540">
    <property type="component" value="Chromosome II"/>
</dbReference>
<dbReference type="GO" id="GO:0005737">
    <property type="term" value="C:cytoplasm"/>
    <property type="evidence" value="ECO:0007669"/>
    <property type="project" value="UniProtKB-SubCell"/>
</dbReference>
<dbReference type="GO" id="GO:0050480">
    <property type="term" value="F:imidazolonepropionase activity"/>
    <property type="evidence" value="ECO:0007669"/>
    <property type="project" value="UniProtKB-UniRule"/>
</dbReference>
<dbReference type="GO" id="GO:0005506">
    <property type="term" value="F:iron ion binding"/>
    <property type="evidence" value="ECO:0007669"/>
    <property type="project" value="UniProtKB-UniRule"/>
</dbReference>
<dbReference type="GO" id="GO:0008270">
    <property type="term" value="F:zinc ion binding"/>
    <property type="evidence" value="ECO:0007669"/>
    <property type="project" value="UniProtKB-UniRule"/>
</dbReference>
<dbReference type="GO" id="GO:0019556">
    <property type="term" value="P:L-histidine catabolic process to glutamate and formamide"/>
    <property type="evidence" value="ECO:0007669"/>
    <property type="project" value="UniProtKB-UniPathway"/>
</dbReference>
<dbReference type="GO" id="GO:0019557">
    <property type="term" value="P:L-histidine catabolic process to glutamate and formate"/>
    <property type="evidence" value="ECO:0007669"/>
    <property type="project" value="UniProtKB-UniPathway"/>
</dbReference>
<dbReference type="CDD" id="cd01296">
    <property type="entry name" value="Imidazolone-5PH"/>
    <property type="match status" value="1"/>
</dbReference>
<dbReference type="FunFam" id="3.20.20.140:FF:000007">
    <property type="entry name" value="Imidazolonepropionase"/>
    <property type="match status" value="1"/>
</dbReference>
<dbReference type="Gene3D" id="3.20.20.140">
    <property type="entry name" value="Metal-dependent hydrolases"/>
    <property type="match status" value="1"/>
</dbReference>
<dbReference type="Gene3D" id="2.30.40.10">
    <property type="entry name" value="Urease, subunit C, domain 1"/>
    <property type="match status" value="1"/>
</dbReference>
<dbReference type="HAMAP" id="MF_00372">
    <property type="entry name" value="HutI"/>
    <property type="match status" value="1"/>
</dbReference>
<dbReference type="InterPro" id="IPR006680">
    <property type="entry name" value="Amidohydro-rel"/>
</dbReference>
<dbReference type="InterPro" id="IPR005920">
    <property type="entry name" value="HutI"/>
</dbReference>
<dbReference type="InterPro" id="IPR011059">
    <property type="entry name" value="Metal-dep_hydrolase_composite"/>
</dbReference>
<dbReference type="InterPro" id="IPR032466">
    <property type="entry name" value="Metal_Hydrolase"/>
</dbReference>
<dbReference type="NCBIfam" id="TIGR01224">
    <property type="entry name" value="hutI"/>
    <property type="match status" value="1"/>
</dbReference>
<dbReference type="PANTHER" id="PTHR42752">
    <property type="entry name" value="IMIDAZOLONEPROPIONASE"/>
    <property type="match status" value="1"/>
</dbReference>
<dbReference type="PANTHER" id="PTHR42752:SF1">
    <property type="entry name" value="IMIDAZOLONEPROPIONASE-RELATED"/>
    <property type="match status" value="1"/>
</dbReference>
<dbReference type="Pfam" id="PF01979">
    <property type="entry name" value="Amidohydro_1"/>
    <property type="match status" value="1"/>
</dbReference>
<dbReference type="SUPFAM" id="SSF51338">
    <property type="entry name" value="Composite domain of metallo-dependent hydrolases"/>
    <property type="match status" value="1"/>
</dbReference>
<dbReference type="SUPFAM" id="SSF51556">
    <property type="entry name" value="Metallo-dependent hydrolases"/>
    <property type="match status" value="1"/>
</dbReference>
<feature type="chain" id="PRO_0000306443" description="Imidazolonepropionase">
    <location>
        <begin position="1"/>
        <end position="405"/>
    </location>
</feature>
<feature type="binding site" evidence="1">
    <location>
        <position position="73"/>
    </location>
    <ligand>
        <name>Fe(3+)</name>
        <dbReference type="ChEBI" id="CHEBI:29034"/>
    </ligand>
</feature>
<feature type="binding site" evidence="1">
    <location>
        <position position="73"/>
    </location>
    <ligand>
        <name>Zn(2+)</name>
        <dbReference type="ChEBI" id="CHEBI:29105"/>
    </ligand>
</feature>
<feature type="binding site" evidence="1">
    <location>
        <position position="75"/>
    </location>
    <ligand>
        <name>Fe(3+)</name>
        <dbReference type="ChEBI" id="CHEBI:29034"/>
    </ligand>
</feature>
<feature type="binding site" evidence="1">
    <location>
        <position position="75"/>
    </location>
    <ligand>
        <name>Zn(2+)</name>
        <dbReference type="ChEBI" id="CHEBI:29105"/>
    </ligand>
</feature>
<feature type="binding site" evidence="1">
    <location>
        <position position="82"/>
    </location>
    <ligand>
        <name>4-imidazolone-5-propanoate</name>
        <dbReference type="ChEBI" id="CHEBI:77893"/>
    </ligand>
</feature>
<feature type="binding site" evidence="1">
    <location>
        <position position="145"/>
    </location>
    <ligand>
        <name>4-imidazolone-5-propanoate</name>
        <dbReference type="ChEBI" id="CHEBI:77893"/>
    </ligand>
</feature>
<feature type="binding site" evidence="1">
    <location>
        <position position="145"/>
    </location>
    <ligand>
        <name>N-formimidoyl-L-glutamate</name>
        <dbReference type="ChEBI" id="CHEBI:58928"/>
    </ligand>
</feature>
<feature type="binding site" evidence="1">
    <location>
        <position position="178"/>
    </location>
    <ligand>
        <name>4-imidazolone-5-propanoate</name>
        <dbReference type="ChEBI" id="CHEBI:77893"/>
    </ligand>
</feature>
<feature type="binding site" evidence="1">
    <location>
        <position position="243"/>
    </location>
    <ligand>
        <name>Fe(3+)</name>
        <dbReference type="ChEBI" id="CHEBI:29034"/>
    </ligand>
</feature>
<feature type="binding site" evidence="1">
    <location>
        <position position="243"/>
    </location>
    <ligand>
        <name>Zn(2+)</name>
        <dbReference type="ChEBI" id="CHEBI:29105"/>
    </ligand>
</feature>
<feature type="binding site" evidence="1">
    <location>
        <position position="246"/>
    </location>
    <ligand>
        <name>4-imidazolone-5-propanoate</name>
        <dbReference type="ChEBI" id="CHEBI:77893"/>
    </ligand>
</feature>
<feature type="binding site" evidence="1">
    <location>
        <position position="318"/>
    </location>
    <ligand>
        <name>Fe(3+)</name>
        <dbReference type="ChEBI" id="CHEBI:29034"/>
    </ligand>
</feature>
<feature type="binding site" evidence="1">
    <location>
        <position position="318"/>
    </location>
    <ligand>
        <name>Zn(2+)</name>
        <dbReference type="ChEBI" id="CHEBI:29105"/>
    </ligand>
</feature>
<feature type="binding site" evidence="1">
    <location>
        <position position="320"/>
    </location>
    <ligand>
        <name>N-formimidoyl-L-glutamate</name>
        <dbReference type="ChEBI" id="CHEBI:58928"/>
    </ligand>
</feature>
<feature type="binding site" evidence="1">
    <location>
        <position position="322"/>
    </location>
    <ligand>
        <name>N-formimidoyl-L-glutamate</name>
        <dbReference type="ChEBI" id="CHEBI:58928"/>
    </ligand>
</feature>
<feature type="binding site" evidence="1">
    <location>
        <position position="323"/>
    </location>
    <ligand>
        <name>4-imidazolone-5-propanoate</name>
        <dbReference type="ChEBI" id="CHEBI:77893"/>
    </ligand>
</feature>
<comment type="function">
    <text evidence="1">Catalyzes the hydrolytic cleavage of the carbon-nitrogen bond in imidazolone-5-propanoate to yield N-formimidoyl-L-glutamate. It is the third step in the universal histidine degradation pathway.</text>
</comment>
<comment type="catalytic activity">
    <reaction evidence="1">
        <text>4-imidazolone-5-propanoate + H2O = N-formimidoyl-L-glutamate</text>
        <dbReference type="Rhea" id="RHEA:23660"/>
        <dbReference type="ChEBI" id="CHEBI:15377"/>
        <dbReference type="ChEBI" id="CHEBI:58928"/>
        <dbReference type="ChEBI" id="CHEBI:77893"/>
        <dbReference type="EC" id="3.5.2.7"/>
    </reaction>
</comment>
<comment type="cofactor">
    <cofactor evidence="1">
        <name>Zn(2+)</name>
        <dbReference type="ChEBI" id="CHEBI:29105"/>
    </cofactor>
    <cofactor evidence="1">
        <name>Fe(3+)</name>
        <dbReference type="ChEBI" id="CHEBI:29034"/>
    </cofactor>
    <text evidence="1">Binds 1 zinc or iron ion per subunit.</text>
</comment>
<comment type="pathway">
    <text evidence="1">Amino-acid degradation; L-histidine degradation into L-glutamate; N-formimidoyl-L-glutamate from L-histidine: step 3/3.</text>
</comment>
<comment type="subcellular location">
    <subcellularLocation>
        <location evidence="1">Cytoplasm</location>
    </subcellularLocation>
</comment>
<comment type="similarity">
    <text evidence="1">Belongs to the metallo-dependent hydrolases superfamily. HutI family.</text>
</comment>
<evidence type="ECO:0000255" key="1">
    <source>
        <dbReference type="HAMAP-Rule" id="MF_00372"/>
    </source>
</evidence>
<organism>
    <name type="scientific">Brucella abortus biovar 1 (strain 9-941)</name>
    <dbReference type="NCBI Taxonomy" id="262698"/>
    <lineage>
        <taxon>Bacteria</taxon>
        <taxon>Pseudomonadati</taxon>
        <taxon>Pseudomonadota</taxon>
        <taxon>Alphaproteobacteria</taxon>
        <taxon>Hyphomicrobiales</taxon>
        <taxon>Brucellaceae</taxon>
        <taxon>Brucella/Ochrobactrum group</taxon>
        <taxon>Brucella</taxon>
    </lineage>
</organism>
<keyword id="KW-0963">Cytoplasm</keyword>
<keyword id="KW-0369">Histidine metabolism</keyword>
<keyword id="KW-0378">Hydrolase</keyword>
<keyword id="KW-0408">Iron</keyword>
<keyword id="KW-0479">Metal-binding</keyword>
<keyword id="KW-0862">Zinc</keyword>
<accession>Q579E7</accession>
<gene>
    <name evidence="1" type="primary">hutI</name>
    <name type="ordered locus">BruAb2_0304</name>
</gene>
<protein>
    <recommendedName>
        <fullName evidence="1">Imidazolonepropionase</fullName>
        <ecNumber evidence="1">3.5.2.7</ecNumber>
    </recommendedName>
    <alternativeName>
        <fullName evidence="1">Imidazolone-5-propionate hydrolase</fullName>
    </alternativeName>
</protein>